<dbReference type="EMBL" id="CP001034">
    <property type="protein sequence ID" value="ACB85372.1"/>
    <property type="molecule type" value="Genomic_DNA"/>
</dbReference>
<dbReference type="RefSeq" id="WP_012448239.1">
    <property type="nucleotide sequence ID" value="NC_010718.1"/>
</dbReference>
<dbReference type="SMR" id="B2A5L8"/>
<dbReference type="FunCoup" id="B2A5L8">
    <property type="interactions" value="372"/>
</dbReference>
<dbReference type="STRING" id="457570.Nther_1800"/>
<dbReference type="KEGG" id="nth:Nther_1800"/>
<dbReference type="eggNOG" id="COG0217">
    <property type="taxonomic scope" value="Bacteria"/>
</dbReference>
<dbReference type="HOGENOM" id="CLU_062974_2_2_9"/>
<dbReference type="InParanoid" id="B2A5L8"/>
<dbReference type="OrthoDB" id="9781053at2"/>
<dbReference type="Proteomes" id="UP000001683">
    <property type="component" value="Chromosome"/>
</dbReference>
<dbReference type="GO" id="GO:0005829">
    <property type="term" value="C:cytosol"/>
    <property type="evidence" value="ECO:0007669"/>
    <property type="project" value="TreeGrafter"/>
</dbReference>
<dbReference type="GO" id="GO:0003677">
    <property type="term" value="F:DNA binding"/>
    <property type="evidence" value="ECO:0007669"/>
    <property type="project" value="UniProtKB-UniRule"/>
</dbReference>
<dbReference type="GO" id="GO:0006355">
    <property type="term" value="P:regulation of DNA-templated transcription"/>
    <property type="evidence" value="ECO:0007669"/>
    <property type="project" value="UniProtKB-UniRule"/>
</dbReference>
<dbReference type="FunFam" id="1.10.10.200:FF:000002">
    <property type="entry name" value="Probable transcriptional regulatory protein CLM62_37755"/>
    <property type="match status" value="1"/>
</dbReference>
<dbReference type="FunFam" id="3.30.70.980:FF:000002">
    <property type="entry name" value="Probable transcriptional regulatory protein YebC"/>
    <property type="match status" value="1"/>
</dbReference>
<dbReference type="Gene3D" id="1.10.10.200">
    <property type="match status" value="1"/>
</dbReference>
<dbReference type="Gene3D" id="3.30.70.980">
    <property type="match status" value="2"/>
</dbReference>
<dbReference type="HAMAP" id="MF_00693">
    <property type="entry name" value="Transcrip_reg_TACO1"/>
    <property type="match status" value="1"/>
</dbReference>
<dbReference type="InterPro" id="IPR017856">
    <property type="entry name" value="Integrase-like_N"/>
</dbReference>
<dbReference type="InterPro" id="IPR048300">
    <property type="entry name" value="TACO1_YebC-like_2nd/3rd_dom"/>
</dbReference>
<dbReference type="InterPro" id="IPR049083">
    <property type="entry name" value="TACO1_YebC_N"/>
</dbReference>
<dbReference type="InterPro" id="IPR002876">
    <property type="entry name" value="Transcrip_reg_TACO1-like"/>
</dbReference>
<dbReference type="InterPro" id="IPR026564">
    <property type="entry name" value="Transcrip_reg_TACO1-like_dom3"/>
</dbReference>
<dbReference type="InterPro" id="IPR029072">
    <property type="entry name" value="YebC-like"/>
</dbReference>
<dbReference type="NCBIfam" id="NF001030">
    <property type="entry name" value="PRK00110.1"/>
    <property type="match status" value="1"/>
</dbReference>
<dbReference type="NCBIfam" id="NF009044">
    <property type="entry name" value="PRK12378.1"/>
    <property type="match status" value="1"/>
</dbReference>
<dbReference type="NCBIfam" id="TIGR01033">
    <property type="entry name" value="YebC/PmpR family DNA-binding transcriptional regulator"/>
    <property type="match status" value="1"/>
</dbReference>
<dbReference type="PANTHER" id="PTHR12532:SF6">
    <property type="entry name" value="TRANSCRIPTIONAL REGULATORY PROTEIN YEBC-RELATED"/>
    <property type="match status" value="1"/>
</dbReference>
<dbReference type="PANTHER" id="PTHR12532">
    <property type="entry name" value="TRANSLATIONAL ACTIVATOR OF CYTOCHROME C OXIDASE 1"/>
    <property type="match status" value="1"/>
</dbReference>
<dbReference type="Pfam" id="PF20772">
    <property type="entry name" value="TACO1_YebC_N"/>
    <property type="match status" value="1"/>
</dbReference>
<dbReference type="Pfam" id="PF01709">
    <property type="entry name" value="Transcrip_reg"/>
    <property type="match status" value="1"/>
</dbReference>
<dbReference type="SUPFAM" id="SSF75625">
    <property type="entry name" value="YebC-like"/>
    <property type="match status" value="1"/>
</dbReference>
<evidence type="ECO:0000255" key="1">
    <source>
        <dbReference type="HAMAP-Rule" id="MF_00693"/>
    </source>
</evidence>
<protein>
    <recommendedName>
        <fullName evidence="1">Probable transcriptional regulatory protein Nther_1800</fullName>
    </recommendedName>
</protein>
<proteinExistence type="inferred from homology"/>
<reference key="1">
    <citation type="submission" date="2008-04" db="EMBL/GenBank/DDBJ databases">
        <title>Complete sequence of chromosome of Natranaerobius thermophilus JW/NM-WN-LF.</title>
        <authorList>
            <consortium name="US DOE Joint Genome Institute"/>
            <person name="Copeland A."/>
            <person name="Lucas S."/>
            <person name="Lapidus A."/>
            <person name="Glavina del Rio T."/>
            <person name="Dalin E."/>
            <person name="Tice H."/>
            <person name="Bruce D."/>
            <person name="Goodwin L."/>
            <person name="Pitluck S."/>
            <person name="Chertkov O."/>
            <person name="Brettin T."/>
            <person name="Detter J.C."/>
            <person name="Han C."/>
            <person name="Kuske C.R."/>
            <person name="Schmutz J."/>
            <person name="Larimer F."/>
            <person name="Land M."/>
            <person name="Hauser L."/>
            <person name="Kyrpides N."/>
            <person name="Lykidis A."/>
            <person name="Mesbah N.M."/>
            <person name="Wiegel J."/>
        </authorList>
    </citation>
    <scope>NUCLEOTIDE SEQUENCE [LARGE SCALE GENOMIC DNA]</scope>
    <source>
        <strain>ATCC BAA-1301 / DSM 18059 / JW/NM-WN-LF</strain>
    </source>
</reference>
<sequence length="250" mass="28110">MAGHSKWANIKHKKARVDEKRGKLFSKLSKEIIVAAKEGGGDPEKNFRLRMAVQKAKENNMPNDNIERAIKKGTGELKGFNYEEISYEGYGPGGVAIFLDAMTDNKNRTASEVRHIFTKNDGNLGEDGCVAWMFDRKGLITIDKEQAENIDEEELMLLTAEAGAEDFKSDNNSIEIVTTPQDFEQVREALENEEVPLSYKEVTMIPSNTVKVEGEEAKKVLQLMEELEDHDDVQNVYANFDIDDSLMETG</sequence>
<keyword id="KW-0963">Cytoplasm</keyword>
<keyword id="KW-0238">DNA-binding</keyword>
<keyword id="KW-1185">Reference proteome</keyword>
<keyword id="KW-0804">Transcription</keyword>
<keyword id="KW-0805">Transcription regulation</keyword>
<feature type="chain" id="PRO_1000132220" description="Probable transcriptional regulatory protein Nther_1800">
    <location>
        <begin position="1"/>
        <end position="250"/>
    </location>
</feature>
<gene>
    <name type="ordered locus">Nther_1800</name>
</gene>
<accession>B2A5L8</accession>
<name>Y1800_NATTJ</name>
<comment type="subcellular location">
    <subcellularLocation>
        <location evidence="1">Cytoplasm</location>
    </subcellularLocation>
</comment>
<comment type="similarity">
    <text evidence="1">Belongs to the TACO1 family.</text>
</comment>
<organism>
    <name type="scientific">Natranaerobius thermophilus (strain ATCC BAA-1301 / DSM 18059 / JW/NM-WN-LF)</name>
    <dbReference type="NCBI Taxonomy" id="457570"/>
    <lineage>
        <taxon>Bacteria</taxon>
        <taxon>Bacillati</taxon>
        <taxon>Bacillota</taxon>
        <taxon>Clostridia</taxon>
        <taxon>Natranaerobiales</taxon>
        <taxon>Natranaerobiaceae</taxon>
        <taxon>Natranaerobius</taxon>
    </lineage>
</organism>